<keyword id="KW-0325">Glycoprotein</keyword>
<keyword id="KW-1185">Reference proteome</keyword>
<keyword id="KW-0732">Signal</keyword>
<organism>
    <name type="scientific">Encephalitozoon cuniculi (strain GB-M1)</name>
    <name type="common">Microsporidian parasite</name>
    <dbReference type="NCBI Taxonomy" id="284813"/>
    <lineage>
        <taxon>Eukaryota</taxon>
        <taxon>Fungi</taxon>
        <taxon>Fungi incertae sedis</taxon>
        <taxon>Microsporidia</taxon>
        <taxon>Unikaryonidae</taxon>
        <taxon>Encephalitozoon</taxon>
    </lineage>
</organism>
<feature type="signal peptide" evidence="1">
    <location>
        <begin position="1"/>
        <end position="19"/>
    </location>
</feature>
<feature type="chain" id="PRO_0000382773" description="Uncharacterized protein ECU05_1040">
    <location>
        <begin position="20"/>
        <end position="243"/>
    </location>
</feature>
<feature type="glycosylation site" description="N-linked (GlcNAc...) asparagine" evidence="1">
    <location>
        <position position="112"/>
    </location>
</feature>
<feature type="glycosylation site" description="N-linked (GlcNAc...) asparagine" evidence="1">
    <location>
        <position position="206"/>
    </location>
</feature>
<protein>
    <recommendedName>
        <fullName>Uncharacterized protein ECU05_1040</fullName>
    </recommendedName>
</protein>
<gene>
    <name type="ordered locus">ECU05_1040</name>
</gene>
<proteinExistence type="evidence at protein level"/>
<sequence>MKSLPLLGILAFAANRLSAKHISHHYDVHIMGNYVDSLKKANPPSESNEMISKARYLNKVYFDICEPAYRDAGAIMTQERFKYIALVLNFLYEFCSAREYELAAVTATVLHNTSYLRIFEAPGSDKYKPRGIFQICTKKNYAILESIAFFYHDYVENPERVGTFSIHVLVDITCFWLHMSFAKKRRIDIYDVLSICNPSEYEILRNKSKYSREEVKKAEERFANRDEIYQKMLSIIYINYYRE</sequence>
<dbReference type="EMBL" id="AL590445">
    <property type="protein sequence ID" value="CAD26624.1"/>
    <property type="molecule type" value="Genomic_DNA"/>
</dbReference>
<dbReference type="RefSeq" id="NP_597447.1">
    <property type="nucleotide sequence ID" value="NM_001041313.1"/>
</dbReference>
<dbReference type="SMR" id="Q8SVI9"/>
<dbReference type="GeneID" id="859113"/>
<dbReference type="KEGG" id="ecu:ECU05_1040"/>
<dbReference type="VEuPathDB" id="MicrosporidiaDB:ECU05_1040"/>
<dbReference type="HOGENOM" id="CLU_1107121_0_0_1"/>
<dbReference type="InParanoid" id="Q8SVI9"/>
<dbReference type="OrthoDB" id="2192251at2759"/>
<dbReference type="Proteomes" id="UP000000819">
    <property type="component" value="Chromosome V"/>
</dbReference>
<dbReference type="Gene3D" id="1.10.530.10">
    <property type="match status" value="1"/>
</dbReference>
<evidence type="ECO:0000255" key="1"/>
<evidence type="ECO:0000269" key="2">
    <source>
    </source>
</evidence>
<accession>Q8SVI9</accession>
<comment type="developmental stage">
    <text evidence="2">Expressed in late sporogonial stages.</text>
</comment>
<name>Y5A4_ENCCU</name>
<reference key="1">
    <citation type="journal article" date="2001" name="Nature">
        <title>Genome sequence and gene compaction of the eukaryote parasite Encephalitozoon cuniculi.</title>
        <authorList>
            <person name="Katinka M.D."/>
            <person name="Duprat S."/>
            <person name="Cornillot E."/>
            <person name="Metenier G."/>
            <person name="Thomarat F."/>
            <person name="Prensier G."/>
            <person name="Barbe V."/>
            <person name="Peyretaillade E."/>
            <person name="Brottier P."/>
            <person name="Wincker P."/>
            <person name="Delbac F."/>
            <person name="El Alaoui H."/>
            <person name="Peyret P."/>
            <person name="Saurin W."/>
            <person name="Gouy M."/>
            <person name="Weissenbach J."/>
            <person name="Vivares C.P."/>
        </authorList>
    </citation>
    <scope>NUCLEOTIDE SEQUENCE [LARGE SCALE GENOMIC DNA]</scope>
    <source>
        <strain>GB-M1</strain>
    </source>
</reference>
<reference key="2">
    <citation type="journal article" date="2006" name="Proteomics">
        <title>Proteomic analysis of the eukaryotic parasite Encephalitozoon cuniculi (microsporidia): a reference map for proteins expressed in late sporogonial stages.</title>
        <authorList>
            <person name="Brosson D."/>
            <person name="Kuhn L."/>
            <person name="Delbac F."/>
            <person name="Garin J."/>
            <person name="Vivares C.P."/>
            <person name="Texier C."/>
        </authorList>
    </citation>
    <scope>IDENTIFICATION BY MASS SPECTROMETRY [LARGE SCALE ANALYSIS]</scope>
    <scope>DEVELOPMENTAL STAGE</scope>
</reference>